<organism>
    <name type="scientific">Mycosarcoma maydis</name>
    <name type="common">Corn smut fungus</name>
    <name type="synonym">Ustilago maydis</name>
    <dbReference type="NCBI Taxonomy" id="5270"/>
    <lineage>
        <taxon>Eukaryota</taxon>
        <taxon>Fungi</taxon>
        <taxon>Dikarya</taxon>
        <taxon>Basidiomycota</taxon>
        <taxon>Ustilaginomycotina</taxon>
        <taxon>Ustilaginomycetes</taxon>
        <taxon>Ustilaginales</taxon>
        <taxon>Ustilaginaceae</taxon>
        <taxon>Mycosarcoma</taxon>
    </lineage>
</organism>
<dbReference type="EMBL" id="CM003140">
    <property type="protein sequence ID" value="KIS71615.1"/>
    <property type="molecule type" value="Genomic_DNA"/>
</dbReference>
<dbReference type="RefSeq" id="XP_011386030.1">
    <property type="nucleotide sequence ID" value="XM_011387728.1"/>
</dbReference>
<dbReference type="STRING" id="237631.Q4PIK6"/>
<dbReference type="EnsemblFungi" id="KIS71615">
    <property type="protein sequence ID" value="KIS71615"/>
    <property type="gene ID" value="UMAG_00057"/>
</dbReference>
<dbReference type="GeneID" id="23561464"/>
<dbReference type="KEGG" id="uma:UMAG_00057"/>
<dbReference type="VEuPathDB" id="FungiDB:UMAG_00057"/>
<dbReference type="eggNOG" id="KOG4431">
    <property type="taxonomic scope" value="Eukaryota"/>
</dbReference>
<dbReference type="HOGENOM" id="CLU_086118_0_0_1"/>
<dbReference type="InParanoid" id="Q4PIK6"/>
<dbReference type="OMA" id="RWRVGFQ"/>
<dbReference type="OrthoDB" id="6604018at2759"/>
<dbReference type="Proteomes" id="UP000000561">
    <property type="component" value="Chromosome 1"/>
</dbReference>
<dbReference type="GO" id="GO:0031966">
    <property type="term" value="C:mitochondrial membrane"/>
    <property type="evidence" value="ECO:0007669"/>
    <property type="project" value="UniProtKB-SubCell"/>
</dbReference>
<dbReference type="GO" id="GO:0005739">
    <property type="term" value="C:mitochondrion"/>
    <property type="evidence" value="ECO:0000318"/>
    <property type="project" value="GO_Central"/>
</dbReference>
<dbReference type="GO" id="GO:0097250">
    <property type="term" value="P:mitochondrial respirasome assembly"/>
    <property type="evidence" value="ECO:0000318"/>
    <property type="project" value="GO_Central"/>
</dbReference>
<dbReference type="Gene3D" id="6.10.140.1320">
    <property type="match status" value="1"/>
</dbReference>
<dbReference type="InterPro" id="IPR007667">
    <property type="entry name" value="Hypoxia_induced_domain"/>
</dbReference>
<dbReference type="InterPro" id="IPR050355">
    <property type="entry name" value="RCF1"/>
</dbReference>
<dbReference type="PANTHER" id="PTHR12297:SF3">
    <property type="entry name" value="HIG1 DOMAIN FAMILY MEMBER 1A"/>
    <property type="match status" value="1"/>
</dbReference>
<dbReference type="PANTHER" id="PTHR12297">
    <property type="entry name" value="HYPOXIA-INDUCBILE GENE 1 HIG1 -RELATED"/>
    <property type="match status" value="1"/>
</dbReference>
<dbReference type="Pfam" id="PF04588">
    <property type="entry name" value="HIG_1_N"/>
    <property type="match status" value="1"/>
</dbReference>
<dbReference type="PROSITE" id="PS51503">
    <property type="entry name" value="HIG1"/>
    <property type="match status" value="1"/>
</dbReference>
<gene>
    <name type="primary">RCF1</name>
    <name type="synonym">AIM31</name>
    <name type="ORF">UMAG_00057</name>
</gene>
<proteinExistence type="inferred from homology"/>
<reference key="1">
    <citation type="journal article" date="2006" name="Nature">
        <title>Insights from the genome of the biotrophic fungal plant pathogen Ustilago maydis.</title>
        <authorList>
            <person name="Kaemper J."/>
            <person name="Kahmann R."/>
            <person name="Boelker M."/>
            <person name="Ma L.-J."/>
            <person name="Brefort T."/>
            <person name="Saville B.J."/>
            <person name="Banuett F."/>
            <person name="Kronstad J.W."/>
            <person name="Gold S.E."/>
            <person name="Mueller O."/>
            <person name="Perlin M.H."/>
            <person name="Woesten H.A.B."/>
            <person name="de Vries R."/>
            <person name="Ruiz-Herrera J."/>
            <person name="Reynaga-Pena C.G."/>
            <person name="Snetselaar K."/>
            <person name="McCann M."/>
            <person name="Perez-Martin J."/>
            <person name="Feldbruegge M."/>
            <person name="Basse C.W."/>
            <person name="Steinberg G."/>
            <person name="Ibeas J.I."/>
            <person name="Holloman W."/>
            <person name="Guzman P."/>
            <person name="Farman M.L."/>
            <person name="Stajich J.E."/>
            <person name="Sentandreu R."/>
            <person name="Gonzalez-Prieto J.M."/>
            <person name="Kennell J.C."/>
            <person name="Molina L."/>
            <person name="Schirawski J."/>
            <person name="Mendoza-Mendoza A."/>
            <person name="Greilinger D."/>
            <person name="Muench K."/>
            <person name="Roessel N."/>
            <person name="Scherer M."/>
            <person name="Vranes M."/>
            <person name="Ladendorf O."/>
            <person name="Vincon V."/>
            <person name="Fuchs U."/>
            <person name="Sandrock B."/>
            <person name="Meng S."/>
            <person name="Ho E.C.H."/>
            <person name="Cahill M.J."/>
            <person name="Boyce K.J."/>
            <person name="Klose J."/>
            <person name="Klosterman S.J."/>
            <person name="Deelstra H.J."/>
            <person name="Ortiz-Castellanos L."/>
            <person name="Li W."/>
            <person name="Sanchez-Alonso P."/>
            <person name="Schreier P.H."/>
            <person name="Haeuser-Hahn I."/>
            <person name="Vaupel M."/>
            <person name="Koopmann E."/>
            <person name="Friedrich G."/>
            <person name="Voss H."/>
            <person name="Schlueter T."/>
            <person name="Margolis J."/>
            <person name="Platt D."/>
            <person name="Swimmer C."/>
            <person name="Gnirke A."/>
            <person name="Chen F."/>
            <person name="Vysotskaia V."/>
            <person name="Mannhaupt G."/>
            <person name="Gueldener U."/>
            <person name="Muensterkoetter M."/>
            <person name="Haase D."/>
            <person name="Oesterheld M."/>
            <person name="Mewes H.-W."/>
            <person name="Mauceli E.W."/>
            <person name="DeCaprio D."/>
            <person name="Wade C.M."/>
            <person name="Butler J."/>
            <person name="Young S.K."/>
            <person name="Jaffe D.B."/>
            <person name="Calvo S.E."/>
            <person name="Nusbaum C."/>
            <person name="Galagan J.E."/>
            <person name="Birren B.W."/>
        </authorList>
    </citation>
    <scope>NUCLEOTIDE SEQUENCE [LARGE SCALE GENOMIC DNA]</scope>
    <source>
        <strain>DSM 14603 / FGSC 9021 / UM521</strain>
    </source>
</reference>
<reference key="2">
    <citation type="submission" date="2014-09" db="EMBL/GenBank/DDBJ databases">
        <authorList>
            <person name="Gueldener U."/>
            <person name="Muensterkoetter M."/>
            <person name="Walter M.C."/>
            <person name="Mannhaupt G."/>
            <person name="Kahmann R."/>
        </authorList>
    </citation>
    <scope>GENOME REANNOTATION</scope>
    <source>
        <strain>DSM 14603 / FGSC 9021 / UM521</strain>
    </source>
</reference>
<protein>
    <recommendedName>
        <fullName>Respiratory supercomplex factor 1, mitochondrial</fullName>
    </recommendedName>
</protein>
<evidence type="ECO:0000250" key="1"/>
<evidence type="ECO:0000255" key="2"/>
<evidence type="ECO:0000255" key="3">
    <source>
        <dbReference type="PROSITE-ProRule" id="PRU00836"/>
    </source>
</evidence>
<evidence type="ECO:0000256" key="4">
    <source>
        <dbReference type="SAM" id="MobiDB-lite"/>
    </source>
</evidence>
<evidence type="ECO:0000305" key="5"/>
<accession>Q4PIK6</accession>
<accession>A0A0D1EBA0</accession>
<sequence length="214" mass="23280">MSGMPNAELVREQQQPGDPMGSSAHPNAYVPEVGGLGSELPEAPRDKFFRKMREQPLVPIGSLLTCGALIAASNHLRSGNRDQFNKALRWRVGFQGLTVLAALVGSFYYGQQAAATIPAPASSSADAPLQQGAVTTLPGRAPTVWQQTRADERANKGRNEFEGRVGQALDRELNDDKRLEEALLGKEEEINLEQLKKTATKPRPVIGQDARRQV</sequence>
<name>RCF1_MYCMD</name>
<comment type="function">
    <text evidence="1">Cytochrome c oxidase subunit which plays a role in assembly of respiratory supercomplexes.</text>
</comment>
<comment type="subunit">
    <text evidence="1">Associates with the respiratory chain complex III/complex IV supercomplex.</text>
</comment>
<comment type="subcellular location">
    <subcellularLocation>
        <location evidence="3">Mitochondrion membrane</location>
        <topology evidence="3">Multi-pass membrane protein</topology>
    </subcellularLocation>
</comment>
<comment type="similarity">
    <text evidence="5">Belongs to the RCF1 family.</text>
</comment>
<feature type="chain" id="PRO_0000399663" description="Respiratory supercomplex factor 1, mitochondrial">
    <location>
        <begin position="1"/>
        <end position="214"/>
    </location>
</feature>
<feature type="transmembrane region" description="Helical" evidence="3">
    <location>
        <begin position="57"/>
        <end position="73"/>
    </location>
</feature>
<feature type="transmembrane region" description="Helical" evidence="3">
    <location>
        <begin position="88"/>
        <end position="109"/>
    </location>
</feature>
<feature type="domain" description="HIG1" evidence="3">
    <location>
        <begin position="29"/>
        <end position="120"/>
    </location>
</feature>
<feature type="region of interest" description="Disordered" evidence="4">
    <location>
        <begin position="1"/>
        <end position="36"/>
    </location>
</feature>
<feature type="region of interest" description="Disordered" evidence="4">
    <location>
        <begin position="195"/>
        <end position="214"/>
    </location>
</feature>
<feature type="coiled-coil region" evidence="2">
    <location>
        <begin position="177"/>
        <end position="197"/>
    </location>
</feature>
<keyword id="KW-0175">Coiled coil</keyword>
<keyword id="KW-0472">Membrane</keyword>
<keyword id="KW-0496">Mitochondrion</keyword>
<keyword id="KW-1185">Reference proteome</keyword>
<keyword id="KW-0812">Transmembrane</keyword>
<keyword id="KW-1133">Transmembrane helix</keyword>